<evidence type="ECO:0000255" key="1">
    <source>
        <dbReference type="HAMAP-Rule" id="MF_00111"/>
    </source>
</evidence>
<accession>Q39YP9</accession>
<dbReference type="EC" id="2.5.1.7" evidence="1"/>
<dbReference type="EMBL" id="CP000148">
    <property type="protein sequence ID" value="ABB30625.2"/>
    <property type="molecule type" value="Genomic_DNA"/>
</dbReference>
<dbReference type="RefSeq" id="WP_004512354.1">
    <property type="nucleotide sequence ID" value="NC_007517.1"/>
</dbReference>
<dbReference type="SMR" id="Q39YP9"/>
<dbReference type="STRING" id="269799.Gmet_0382"/>
<dbReference type="KEGG" id="gme:Gmet_0382"/>
<dbReference type="eggNOG" id="COG0766">
    <property type="taxonomic scope" value="Bacteria"/>
</dbReference>
<dbReference type="HOGENOM" id="CLU_027387_0_0_7"/>
<dbReference type="UniPathway" id="UPA00219"/>
<dbReference type="Proteomes" id="UP000007073">
    <property type="component" value="Chromosome"/>
</dbReference>
<dbReference type="GO" id="GO:0005737">
    <property type="term" value="C:cytoplasm"/>
    <property type="evidence" value="ECO:0007669"/>
    <property type="project" value="UniProtKB-SubCell"/>
</dbReference>
<dbReference type="GO" id="GO:0008760">
    <property type="term" value="F:UDP-N-acetylglucosamine 1-carboxyvinyltransferase activity"/>
    <property type="evidence" value="ECO:0007669"/>
    <property type="project" value="UniProtKB-UniRule"/>
</dbReference>
<dbReference type="GO" id="GO:0051301">
    <property type="term" value="P:cell division"/>
    <property type="evidence" value="ECO:0007669"/>
    <property type="project" value="UniProtKB-KW"/>
</dbReference>
<dbReference type="GO" id="GO:0071555">
    <property type="term" value="P:cell wall organization"/>
    <property type="evidence" value="ECO:0007669"/>
    <property type="project" value="UniProtKB-KW"/>
</dbReference>
<dbReference type="GO" id="GO:0009252">
    <property type="term" value="P:peptidoglycan biosynthetic process"/>
    <property type="evidence" value="ECO:0007669"/>
    <property type="project" value="UniProtKB-UniRule"/>
</dbReference>
<dbReference type="GO" id="GO:0008360">
    <property type="term" value="P:regulation of cell shape"/>
    <property type="evidence" value="ECO:0007669"/>
    <property type="project" value="UniProtKB-KW"/>
</dbReference>
<dbReference type="GO" id="GO:0019277">
    <property type="term" value="P:UDP-N-acetylgalactosamine biosynthetic process"/>
    <property type="evidence" value="ECO:0007669"/>
    <property type="project" value="InterPro"/>
</dbReference>
<dbReference type="CDD" id="cd01555">
    <property type="entry name" value="UdpNAET"/>
    <property type="match status" value="1"/>
</dbReference>
<dbReference type="FunFam" id="3.65.10.10:FF:000001">
    <property type="entry name" value="UDP-N-acetylglucosamine 1-carboxyvinyltransferase"/>
    <property type="match status" value="1"/>
</dbReference>
<dbReference type="Gene3D" id="3.65.10.10">
    <property type="entry name" value="Enolpyruvate transferase domain"/>
    <property type="match status" value="2"/>
</dbReference>
<dbReference type="HAMAP" id="MF_00111">
    <property type="entry name" value="MurA"/>
    <property type="match status" value="1"/>
</dbReference>
<dbReference type="InterPro" id="IPR001986">
    <property type="entry name" value="Enolpyruvate_Tfrase_dom"/>
</dbReference>
<dbReference type="InterPro" id="IPR036968">
    <property type="entry name" value="Enolpyruvate_Tfrase_sf"/>
</dbReference>
<dbReference type="InterPro" id="IPR050068">
    <property type="entry name" value="MurA_subfamily"/>
</dbReference>
<dbReference type="InterPro" id="IPR013792">
    <property type="entry name" value="RNA3'P_cycl/enolpyr_Trfase_a/b"/>
</dbReference>
<dbReference type="InterPro" id="IPR005750">
    <property type="entry name" value="UDP_GlcNAc_COvinyl_MurA"/>
</dbReference>
<dbReference type="NCBIfam" id="TIGR01072">
    <property type="entry name" value="murA"/>
    <property type="match status" value="1"/>
</dbReference>
<dbReference type="NCBIfam" id="NF006873">
    <property type="entry name" value="PRK09369.1"/>
    <property type="match status" value="1"/>
</dbReference>
<dbReference type="PANTHER" id="PTHR43783">
    <property type="entry name" value="UDP-N-ACETYLGLUCOSAMINE 1-CARBOXYVINYLTRANSFERASE"/>
    <property type="match status" value="1"/>
</dbReference>
<dbReference type="PANTHER" id="PTHR43783:SF1">
    <property type="entry name" value="UDP-N-ACETYLGLUCOSAMINE 1-CARBOXYVINYLTRANSFERASE"/>
    <property type="match status" value="1"/>
</dbReference>
<dbReference type="Pfam" id="PF00275">
    <property type="entry name" value="EPSP_synthase"/>
    <property type="match status" value="1"/>
</dbReference>
<dbReference type="SUPFAM" id="SSF55205">
    <property type="entry name" value="EPT/RTPC-like"/>
    <property type="match status" value="1"/>
</dbReference>
<gene>
    <name evidence="1" type="primary">murA</name>
    <name type="ordered locus">Gmet_0382</name>
</gene>
<proteinExistence type="inferred from homology"/>
<sequence length="417" mass="44607">MDKLIIKGGKKLTGDVSVSGSKNAALPVFISTILAPGLNEIRNVPFLRDINTTIKVLESLGAVVEGNGNIVKIDTTHVNDVEATYDLVKTMRASVLVLGPLLARHGRARVSLPGGCAIGARPINLHLKGLAALGADIRLEHGYVEAKAKKLKGARINFDIATVGGTEQLMMAAALAKGETILENAAREPEIIDLADILNRMGARIDGAGTDTIRIIGVKELAPVVHDVMPDRIEAGTFMVAAAITGGDIKIHNMKLEHLDALVFKLQDAGVEIINRDNVVRVKGPRRPRAINIKTRPYPGFPTDMQAQFMALMCVADGASVISENIFENRFMHVSELLRFGADITIEGNTATVKGVKKLSGAPVMATDLRASASLILAGLAADNTTEISRIYHLDRGYDSIEKKLAGLGADIKRVKE</sequence>
<feature type="chain" id="PRO_0000231207" description="UDP-N-acetylglucosamine 1-carboxyvinyltransferase">
    <location>
        <begin position="1"/>
        <end position="417"/>
    </location>
</feature>
<feature type="active site" description="Proton donor" evidence="1">
    <location>
        <position position="116"/>
    </location>
</feature>
<feature type="binding site" evidence="1">
    <location>
        <begin position="22"/>
        <end position="23"/>
    </location>
    <ligand>
        <name>phosphoenolpyruvate</name>
        <dbReference type="ChEBI" id="CHEBI:58702"/>
    </ligand>
</feature>
<feature type="binding site" evidence="1">
    <location>
        <position position="92"/>
    </location>
    <ligand>
        <name>UDP-N-acetyl-alpha-D-glucosamine</name>
        <dbReference type="ChEBI" id="CHEBI:57705"/>
    </ligand>
</feature>
<feature type="binding site" evidence="1">
    <location>
        <position position="304"/>
    </location>
    <ligand>
        <name>UDP-N-acetyl-alpha-D-glucosamine</name>
        <dbReference type="ChEBI" id="CHEBI:57705"/>
    </ligand>
</feature>
<feature type="binding site" evidence="1">
    <location>
        <position position="326"/>
    </location>
    <ligand>
        <name>UDP-N-acetyl-alpha-D-glucosamine</name>
        <dbReference type="ChEBI" id="CHEBI:57705"/>
    </ligand>
</feature>
<feature type="modified residue" description="2-(S-cysteinyl)pyruvic acid O-phosphothioketal" evidence="1">
    <location>
        <position position="116"/>
    </location>
</feature>
<name>MURA_GEOMG</name>
<reference key="1">
    <citation type="journal article" date="2009" name="BMC Microbiol.">
        <title>The genome sequence of Geobacter metallireducens: features of metabolism, physiology and regulation common and dissimilar to Geobacter sulfurreducens.</title>
        <authorList>
            <person name="Aklujkar M."/>
            <person name="Krushkal J."/>
            <person name="DiBartolo G."/>
            <person name="Lapidus A."/>
            <person name="Land M.L."/>
            <person name="Lovley D.R."/>
        </authorList>
    </citation>
    <scope>NUCLEOTIDE SEQUENCE [LARGE SCALE GENOMIC DNA]</scope>
    <source>
        <strain>ATCC 53774 / DSM 7210 / GS-15</strain>
    </source>
</reference>
<protein>
    <recommendedName>
        <fullName evidence="1">UDP-N-acetylglucosamine 1-carboxyvinyltransferase</fullName>
        <ecNumber evidence="1">2.5.1.7</ecNumber>
    </recommendedName>
    <alternativeName>
        <fullName evidence="1">Enoylpyruvate transferase</fullName>
    </alternativeName>
    <alternativeName>
        <fullName evidence="1">UDP-N-acetylglucosamine enolpyruvyl transferase</fullName>
        <shortName evidence="1">EPT</shortName>
    </alternativeName>
</protein>
<organism>
    <name type="scientific">Geobacter metallireducens (strain ATCC 53774 / DSM 7210 / GS-15)</name>
    <dbReference type="NCBI Taxonomy" id="269799"/>
    <lineage>
        <taxon>Bacteria</taxon>
        <taxon>Pseudomonadati</taxon>
        <taxon>Thermodesulfobacteriota</taxon>
        <taxon>Desulfuromonadia</taxon>
        <taxon>Geobacterales</taxon>
        <taxon>Geobacteraceae</taxon>
        <taxon>Geobacter</taxon>
    </lineage>
</organism>
<keyword id="KW-0131">Cell cycle</keyword>
<keyword id="KW-0132">Cell division</keyword>
<keyword id="KW-0133">Cell shape</keyword>
<keyword id="KW-0961">Cell wall biogenesis/degradation</keyword>
<keyword id="KW-0963">Cytoplasm</keyword>
<keyword id="KW-0573">Peptidoglycan synthesis</keyword>
<keyword id="KW-0670">Pyruvate</keyword>
<keyword id="KW-1185">Reference proteome</keyword>
<keyword id="KW-0808">Transferase</keyword>
<comment type="function">
    <text evidence="1">Cell wall formation. Adds enolpyruvyl to UDP-N-acetylglucosamine.</text>
</comment>
<comment type="catalytic activity">
    <reaction evidence="1">
        <text>phosphoenolpyruvate + UDP-N-acetyl-alpha-D-glucosamine = UDP-N-acetyl-3-O-(1-carboxyvinyl)-alpha-D-glucosamine + phosphate</text>
        <dbReference type="Rhea" id="RHEA:18681"/>
        <dbReference type="ChEBI" id="CHEBI:43474"/>
        <dbReference type="ChEBI" id="CHEBI:57705"/>
        <dbReference type="ChEBI" id="CHEBI:58702"/>
        <dbReference type="ChEBI" id="CHEBI:68483"/>
        <dbReference type="EC" id="2.5.1.7"/>
    </reaction>
</comment>
<comment type="pathway">
    <text evidence="1">Cell wall biogenesis; peptidoglycan biosynthesis.</text>
</comment>
<comment type="subcellular location">
    <subcellularLocation>
        <location evidence="1">Cytoplasm</location>
    </subcellularLocation>
</comment>
<comment type="similarity">
    <text evidence="1">Belongs to the EPSP synthase family. MurA subfamily.</text>
</comment>